<feature type="chain" id="PRO_0000362717" description="NADH-quinone oxidoreductase subunit A">
    <location>
        <begin position="1"/>
        <end position="119"/>
    </location>
</feature>
<feature type="transmembrane region" description="Helical" evidence="1">
    <location>
        <begin position="7"/>
        <end position="27"/>
    </location>
</feature>
<feature type="transmembrane region" description="Helical" evidence="1">
    <location>
        <begin position="63"/>
        <end position="83"/>
    </location>
</feature>
<feature type="transmembrane region" description="Helical" evidence="1">
    <location>
        <begin position="88"/>
        <end position="108"/>
    </location>
</feature>
<evidence type="ECO:0000255" key="1">
    <source>
        <dbReference type="HAMAP-Rule" id="MF_01394"/>
    </source>
</evidence>
<organism>
    <name type="scientific">Polynucleobacter asymbioticus (strain DSM 18221 / CIP 109841 / QLW-P1DMWA-1)</name>
    <name type="common">Polynucleobacter necessarius subsp. asymbioticus</name>
    <dbReference type="NCBI Taxonomy" id="312153"/>
    <lineage>
        <taxon>Bacteria</taxon>
        <taxon>Pseudomonadati</taxon>
        <taxon>Pseudomonadota</taxon>
        <taxon>Betaproteobacteria</taxon>
        <taxon>Burkholderiales</taxon>
        <taxon>Burkholderiaceae</taxon>
        <taxon>Polynucleobacter</taxon>
    </lineage>
</organism>
<gene>
    <name evidence="1" type="primary">nuoA</name>
    <name type="ordered locus">Pnuc_1051</name>
</gene>
<keyword id="KW-1003">Cell membrane</keyword>
<keyword id="KW-0472">Membrane</keyword>
<keyword id="KW-0520">NAD</keyword>
<keyword id="KW-0874">Quinone</keyword>
<keyword id="KW-1185">Reference proteome</keyword>
<keyword id="KW-1278">Translocase</keyword>
<keyword id="KW-0812">Transmembrane</keyword>
<keyword id="KW-1133">Transmembrane helix</keyword>
<keyword id="KW-0813">Transport</keyword>
<keyword id="KW-0830">Ubiquinone</keyword>
<dbReference type="EC" id="7.1.1.-" evidence="1"/>
<dbReference type="EMBL" id="CP000655">
    <property type="protein sequence ID" value="ABP34267.1"/>
    <property type="molecule type" value="Genomic_DNA"/>
</dbReference>
<dbReference type="RefSeq" id="WP_011902892.1">
    <property type="nucleotide sequence ID" value="NC_009379.1"/>
</dbReference>
<dbReference type="SMR" id="A4SXQ3"/>
<dbReference type="GeneID" id="31481425"/>
<dbReference type="KEGG" id="pnu:Pnuc_1051"/>
<dbReference type="eggNOG" id="COG0838">
    <property type="taxonomic scope" value="Bacteria"/>
</dbReference>
<dbReference type="HOGENOM" id="CLU_119549_3_1_4"/>
<dbReference type="Proteomes" id="UP000000231">
    <property type="component" value="Chromosome"/>
</dbReference>
<dbReference type="GO" id="GO:0030964">
    <property type="term" value="C:NADH dehydrogenase complex"/>
    <property type="evidence" value="ECO:0007669"/>
    <property type="project" value="TreeGrafter"/>
</dbReference>
<dbReference type="GO" id="GO:0005886">
    <property type="term" value="C:plasma membrane"/>
    <property type="evidence" value="ECO:0007669"/>
    <property type="project" value="UniProtKB-SubCell"/>
</dbReference>
<dbReference type="GO" id="GO:0008137">
    <property type="term" value="F:NADH dehydrogenase (ubiquinone) activity"/>
    <property type="evidence" value="ECO:0007669"/>
    <property type="project" value="InterPro"/>
</dbReference>
<dbReference type="GO" id="GO:0050136">
    <property type="term" value="F:NADH:ubiquinone reductase (non-electrogenic) activity"/>
    <property type="evidence" value="ECO:0007669"/>
    <property type="project" value="UniProtKB-UniRule"/>
</dbReference>
<dbReference type="GO" id="GO:0048038">
    <property type="term" value="F:quinone binding"/>
    <property type="evidence" value="ECO:0007669"/>
    <property type="project" value="UniProtKB-KW"/>
</dbReference>
<dbReference type="FunFam" id="1.20.58.1610:FF:000004">
    <property type="entry name" value="NADH-quinone oxidoreductase subunit A"/>
    <property type="match status" value="1"/>
</dbReference>
<dbReference type="Gene3D" id="1.20.58.1610">
    <property type="entry name" value="NADH:ubiquinone/plastoquinone oxidoreductase, chain 3"/>
    <property type="match status" value="1"/>
</dbReference>
<dbReference type="HAMAP" id="MF_01394">
    <property type="entry name" value="NDH1_NuoA"/>
    <property type="match status" value="1"/>
</dbReference>
<dbReference type="InterPro" id="IPR023043">
    <property type="entry name" value="NAD(P)H_OxRDtase_bac/plastid"/>
</dbReference>
<dbReference type="InterPro" id="IPR000440">
    <property type="entry name" value="NADH_UbQ/plastoQ_OxRdtase_su3"/>
</dbReference>
<dbReference type="InterPro" id="IPR038430">
    <property type="entry name" value="NDAH_ubi_oxred_su3_sf"/>
</dbReference>
<dbReference type="PANTHER" id="PTHR11058">
    <property type="entry name" value="NADH-UBIQUINONE OXIDOREDUCTASE CHAIN 3"/>
    <property type="match status" value="1"/>
</dbReference>
<dbReference type="PANTHER" id="PTHR11058:SF9">
    <property type="entry name" value="NADH-UBIQUINONE OXIDOREDUCTASE CHAIN 3"/>
    <property type="match status" value="1"/>
</dbReference>
<dbReference type="Pfam" id="PF00507">
    <property type="entry name" value="Oxidored_q4"/>
    <property type="match status" value="1"/>
</dbReference>
<sequence>MNLANYFPVLLFILVGIGVGLVPMFLGKILAPSKPDAEKLSPYECGFEAFEDARMKFDVRYYLIAILFILFDLETAFLFPWGVALRDIGWFGYASMVIFLLEFIVGFVYIWKKGALDWE</sequence>
<comment type="function">
    <text evidence="1">NDH-1 shuttles electrons from NADH, via FMN and iron-sulfur (Fe-S) centers, to quinones in the respiratory chain. The immediate electron acceptor for the enzyme in this species is believed to be ubiquinone. Couples the redox reaction to proton translocation (for every two electrons transferred, four hydrogen ions are translocated across the cytoplasmic membrane), and thus conserves the redox energy in a proton gradient.</text>
</comment>
<comment type="catalytic activity">
    <reaction evidence="1">
        <text>a quinone + NADH + 5 H(+)(in) = a quinol + NAD(+) + 4 H(+)(out)</text>
        <dbReference type="Rhea" id="RHEA:57888"/>
        <dbReference type="ChEBI" id="CHEBI:15378"/>
        <dbReference type="ChEBI" id="CHEBI:24646"/>
        <dbReference type="ChEBI" id="CHEBI:57540"/>
        <dbReference type="ChEBI" id="CHEBI:57945"/>
        <dbReference type="ChEBI" id="CHEBI:132124"/>
    </reaction>
</comment>
<comment type="subunit">
    <text evidence="1">NDH-1 is composed of 14 different subunits. Subunits NuoA, H, J, K, L, M, N constitute the membrane sector of the complex.</text>
</comment>
<comment type="subcellular location">
    <subcellularLocation>
        <location evidence="1">Cell membrane</location>
        <topology evidence="1">Multi-pass membrane protein</topology>
    </subcellularLocation>
</comment>
<comment type="similarity">
    <text evidence="1">Belongs to the complex I subunit 3 family.</text>
</comment>
<reference key="1">
    <citation type="journal article" date="2012" name="Stand. Genomic Sci.">
        <title>Complete genome sequence of Polynucleobacter necessarius subsp. asymbioticus type strain (QLW-P1DMWA-1(T)).</title>
        <authorList>
            <person name="Meincke L."/>
            <person name="Copeland A."/>
            <person name="Lapidus A."/>
            <person name="Lucas S."/>
            <person name="Berry K.W."/>
            <person name="Del Rio T.G."/>
            <person name="Hammon N."/>
            <person name="Dalin E."/>
            <person name="Tice H."/>
            <person name="Pitluck S."/>
            <person name="Richardson P."/>
            <person name="Bruce D."/>
            <person name="Goodwin L."/>
            <person name="Han C."/>
            <person name="Tapia R."/>
            <person name="Detter J.C."/>
            <person name="Schmutz J."/>
            <person name="Brettin T."/>
            <person name="Larimer F."/>
            <person name="Land M."/>
            <person name="Hauser L."/>
            <person name="Kyrpides N.C."/>
            <person name="Ivanova N."/>
            <person name="Goker M."/>
            <person name="Woyke T."/>
            <person name="Wu Q.L."/>
            <person name="Pockl M."/>
            <person name="Hahn M.W."/>
            <person name="Klenk H.P."/>
        </authorList>
    </citation>
    <scope>NUCLEOTIDE SEQUENCE [LARGE SCALE GENOMIC DNA]</scope>
    <source>
        <strain>DSM 18221 / CIP 109841 / QLW-P1DMWA-1</strain>
    </source>
</reference>
<proteinExistence type="inferred from homology"/>
<name>NUOA_POLAQ</name>
<accession>A4SXQ3</accession>
<protein>
    <recommendedName>
        <fullName evidence="1">NADH-quinone oxidoreductase subunit A</fullName>
        <ecNumber evidence="1">7.1.1.-</ecNumber>
    </recommendedName>
    <alternativeName>
        <fullName evidence="1">NADH dehydrogenase I subunit A</fullName>
    </alternativeName>
    <alternativeName>
        <fullName evidence="1">NDH-1 subunit A</fullName>
    </alternativeName>
    <alternativeName>
        <fullName evidence="1">NUO1</fullName>
    </alternativeName>
</protein>